<name>YEGH_ECOLI</name>
<protein>
    <recommendedName>
        <fullName>UPF0053 protein YegH</fullName>
    </recommendedName>
</protein>
<gene>
    <name type="primary">yegH</name>
    <name type="ordered locus">b2063</name>
    <name type="ordered locus">JW5336</name>
</gene>
<keyword id="KW-0129">CBS domain</keyword>
<keyword id="KW-1003">Cell membrane</keyword>
<keyword id="KW-0472">Membrane</keyword>
<keyword id="KW-1185">Reference proteome</keyword>
<keyword id="KW-0677">Repeat</keyword>
<keyword id="KW-0812">Transmembrane</keyword>
<keyword id="KW-1133">Transmembrane helix</keyword>
<comment type="subcellular location">
    <subcellularLocation>
        <location evidence="3">Cell membrane</location>
        <topology evidence="3">Multi-pass membrane protein</topology>
    </subcellularLocation>
</comment>
<comment type="similarity">
    <text evidence="3">Belongs to the UPF0053 family.</text>
</comment>
<feature type="chain" id="PRO_0000088355" description="UPF0053 protein YegH">
    <location>
        <begin position="1"/>
        <end position="527"/>
    </location>
</feature>
<feature type="transmembrane region" description="Helical" evidence="1">
    <location>
        <begin position="14"/>
        <end position="34"/>
    </location>
</feature>
<feature type="transmembrane region" description="Helical" evidence="1">
    <location>
        <begin position="51"/>
        <end position="71"/>
    </location>
</feature>
<feature type="transmembrane region" description="Helical" evidence="1">
    <location>
        <begin position="81"/>
        <end position="101"/>
    </location>
</feature>
<feature type="transmembrane region" description="Helical" evidence="1">
    <location>
        <begin position="145"/>
        <end position="165"/>
    </location>
</feature>
<feature type="transmembrane region" description="Helical" evidence="1">
    <location>
        <begin position="185"/>
        <end position="205"/>
    </location>
</feature>
<feature type="domain" description="CBS 1" evidence="2">
    <location>
        <begin position="306"/>
        <end position="366"/>
    </location>
</feature>
<feature type="domain" description="CBS 2" evidence="2">
    <location>
        <begin position="371"/>
        <end position="429"/>
    </location>
</feature>
<sequence>MEWIADPSIWAGLITLIVIELVLGIDNLVFIAILAEKLPPKQRDRARVTGLLLAMLMRLLLLASISWLVTLTQPLFSFRSFTFSARDLIMLFGGFFLLFKATMELNERLEGKDSNNPTQRKGAKFWGVVTQIVVLDAIFSLDSVITAVGMVDHLLVMMAAVVIAISLMLMASKPLTQFVNSHPTIVILCLSFLLMIGFSLVAEGFGFVIPKGYLYAAIGFSVMIEALNQLAIFNRRRFLSANQTLRQRTTEAVMRLLSGQKEDAELDAETASMLVDHGNQQIFNPQERRMIERVLNLNQRTVSSIMTSRHDIEHIDLNAPEEEIRQLLERNQHTRLVVTDGDDAEDLLGVVHVIDLLQQSLRGEPLNLRVLIRQPLVFPETLPLLPALEQFRNARTHFAFVVDEFGSVEGIVTLSDVTETIAGNLPNEVEEIDARHDIQKNADGSWTANGHMPLEDLVQYVPLPLDEKREYHTIAGLLMEYLQRIPKPGEEVQVGDYLLKTLQVESHRVQKVQIIPLRKDGEMEYEV</sequence>
<reference key="1">
    <citation type="journal article" date="1996" name="DNA Res.">
        <title>A 460-kb DNA sequence of the Escherichia coli K-12 genome corresponding to the 40.1-50.0 min region on the linkage map.</title>
        <authorList>
            <person name="Itoh T."/>
            <person name="Aiba H."/>
            <person name="Baba T."/>
            <person name="Fujita K."/>
            <person name="Hayashi K."/>
            <person name="Inada T."/>
            <person name="Isono K."/>
            <person name="Kasai H."/>
            <person name="Kimura S."/>
            <person name="Kitakawa M."/>
            <person name="Kitagawa M."/>
            <person name="Makino K."/>
            <person name="Miki T."/>
            <person name="Mizobuchi K."/>
            <person name="Mori H."/>
            <person name="Mori T."/>
            <person name="Motomura K."/>
            <person name="Nakade S."/>
            <person name="Nakamura Y."/>
            <person name="Nashimoto H."/>
            <person name="Nishio Y."/>
            <person name="Oshima T."/>
            <person name="Saito N."/>
            <person name="Sampei G."/>
            <person name="Seki Y."/>
            <person name="Sivasundaram S."/>
            <person name="Tagami H."/>
            <person name="Takeda J."/>
            <person name="Takemoto K."/>
            <person name="Wada C."/>
            <person name="Yamamoto Y."/>
            <person name="Horiuchi T."/>
        </authorList>
    </citation>
    <scope>NUCLEOTIDE SEQUENCE [LARGE SCALE GENOMIC DNA]</scope>
    <source>
        <strain>K12 / W3110 / ATCC 27325 / DSM 5911</strain>
    </source>
</reference>
<reference key="2">
    <citation type="journal article" date="1997" name="Science">
        <title>The complete genome sequence of Escherichia coli K-12.</title>
        <authorList>
            <person name="Blattner F.R."/>
            <person name="Plunkett G. III"/>
            <person name="Bloch C.A."/>
            <person name="Perna N.T."/>
            <person name="Burland V."/>
            <person name="Riley M."/>
            <person name="Collado-Vides J."/>
            <person name="Glasner J.D."/>
            <person name="Rode C.K."/>
            <person name="Mayhew G.F."/>
            <person name="Gregor J."/>
            <person name="Davis N.W."/>
            <person name="Kirkpatrick H.A."/>
            <person name="Goeden M.A."/>
            <person name="Rose D.J."/>
            <person name="Mau B."/>
            <person name="Shao Y."/>
        </authorList>
    </citation>
    <scope>NUCLEOTIDE SEQUENCE [LARGE SCALE GENOMIC DNA]</scope>
    <source>
        <strain>K12 / MG1655 / ATCC 47076</strain>
    </source>
</reference>
<reference key="3">
    <citation type="journal article" date="2006" name="Mol. Syst. Biol.">
        <title>Highly accurate genome sequences of Escherichia coli K-12 strains MG1655 and W3110.</title>
        <authorList>
            <person name="Hayashi K."/>
            <person name="Morooka N."/>
            <person name="Yamamoto Y."/>
            <person name="Fujita K."/>
            <person name="Isono K."/>
            <person name="Choi S."/>
            <person name="Ohtsubo E."/>
            <person name="Baba T."/>
            <person name="Wanner B.L."/>
            <person name="Mori H."/>
            <person name="Horiuchi T."/>
        </authorList>
    </citation>
    <scope>NUCLEOTIDE SEQUENCE [LARGE SCALE GENOMIC DNA]</scope>
    <source>
        <strain>K12 / W3110 / ATCC 27325 / DSM 5911</strain>
    </source>
</reference>
<organism>
    <name type="scientific">Escherichia coli (strain K12)</name>
    <dbReference type="NCBI Taxonomy" id="83333"/>
    <lineage>
        <taxon>Bacteria</taxon>
        <taxon>Pseudomonadati</taxon>
        <taxon>Pseudomonadota</taxon>
        <taxon>Gammaproteobacteria</taxon>
        <taxon>Enterobacterales</taxon>
        <taxon>Enterobacteriaceae</taxon>
        <taxon>Escherichia</taxon>
    </lineage>
</organism>
<dbReference type="EMBL" id="U00096">
    <property type="protein sequence ID" value="AAC75124.2"/>
    <property type="molecule type" value="Genomic_DNA"/>
</dbReference>
<dbReference type="EMBL" id="AP009048">
    <property type="protein sequence ID" value="BAA15916.2"/>
    <property type="molecule type" value="Genomic_DNA"/>
</dbReference>
<dbReference type="PIR" id="F64972">
    <property type="entry name" value="F64972"/>
</dbReference>
<dbReference type="RefSeq" id="NP_416567.4">
    <property type="nucleotide sequence ID" value="NC_000913.3"/>
</dbReference>
<dbReference type="RefSeq" id="WP_000454701.1">
    <property type="nucleotide sequence ID" value="NZ_LN832404.1"/>
</dbReference>
<dbReference type="SMR" id="P76389"/>
<dbReference type="BioGRID" id="4259686">
    <property type="interactions" value="4"/>
</dbReference>
<dbReference type="DIP" id="DIP-11879N"/>
<dbReference type="FunCoup" id="P76389">
    <property type="interactions" value="12"/>
</dbReference>
<dbReference type="STRING" id="511145.b2063"/>
<dbReference type="jPOST" id="P76389"/>
<dbReference type="PaxDb" id="511145-b2063"/>
<dbReference type="EnsemblBacteria" id="AAC75124">
    <property type="protein sequence ID" value="AAC75124"/>
    <property type="gene ID" value="b2063"/>
</dbReference>
<dbReference type="GeneID" id="946566"/>
<dbReference type="KEGG" id="ecj:JW5336"/>
<dbReference type="KEGG" id="eco:b2063"/>
<dbReference type="KEGG" id="ecoc:C3026_11605"/>
<dbReference type="PATRIC" id="fig|511145.12.peg.2140"/>
<dbReference type="EchoBASE" id="EB3804"/>
<dbReference type="eggNOG" id="COG1253">
    <property type="taxonomic scope" value="Bacteria"/>
</dbReference>
<dbReference type="HOGENOM" id="CLU_015237_2_0_6"/>
<dbReference type="InParanoid" id="P76389"/>
<dbReference type="OMA" id="GFSIMIE"/>
<dbReference type="OrthoDB" id="9805314at2"/>
<dbReference type="PhylomeDB" id="P76389"/>
<dbReference type="BioCyc" id="EcoCyc:G7108-MONOMER"/>
<dbReference type="PRO" id="PR:P76389"/>
<dbReference type="Proteomes" id="UP000000625">
    <property type="component" value="Chromosome"/>
</dbReference>
<dbReference type="GO" id="GO:0005886">
    <property type="term" value="C:plasma membrane"/>
    <property type="evidence" value="ECO:0000314"/>
    <property type="project" value="EcoCyc"/>
</dbReference>
<dbReference type="GO" id="GO:0050660">
    <property type="term" value="F:flavin adenine dinucleotide binding"/>
    <property type="evidence" value="ECO:0007669"/>
    <property type="project" value="InterPro"/>
</dbReference>
<dbReference type="CDD" id="cd04590">
    <property type="entry name" value="CBS_pair_CorC_HlyC_assoc"/>
    <property type="match status" value="1"/>
</dbReference>
<dbReference type="FunFam" id="3.10.580.10:FF:000011">
    <property type="entry name" value="TerC family inner membrane protein"/>
    <property type="match status" value="1"/>
</dbReference>
<dbReference type="FunFam" id="3.30.465.10:FF:000007">
    <property type="entry name" value="TerC family inner membrane protein"/>
    <property type="match status" value="1"/>
</dbReference>
<dbReference type="Gene3D" id="3.30.465.10">
    <property type="match status" value="1"/>
</dbReference>
<dbReference type="Gene3D" id="3.10.580.10">
    <property type="entry name" value="CBS-domain"/>
    <property type="match status" value="1"/>
</dbReference>
<dbReference type="InterPro" id="IPR000644">
    <property type="entry name" value="CBS_dom"/>
</dbReference>
<dbReference type="InterPro" id="IPR046342">
    <property type="entry name" value="CBS_dom_sf"/>
</dbReference>
<dbReference type="InterPro" id="IPR036318">
    <property type="entry name" value="FAD-bd_PCMH-like_sf"/>
</dbReference>
<dbReference type="InterPro" id="IPR016169">
    <property type="entry name" value="FAD-bd_PCMH_sub2"/>
</dbReference>
<dbReference type="InterPro" id="IPR005496">
    <property type="entry name" value="Integral_membrane_TerC"/>
</dbReference>
<dbReference type="InterPro" id="IPR044751">
    <property type="entry name" value="Ion_transp-like_CBS"/>
</dbReference>
<dbReference type="InterPro" id="IPR005170">
    <property type="entry name" value="Transptr-assoc_dom"/>
</dbReference>
<dbReference type="PANTHER" id="PTHR22777">
    <property type="entry name" value="HEMOLYSIN-RELATED"/>
    <property type="match status" value="1"/>
</dbReference>
<dbReference type="PANTHER" id="PTHR22777:SF30">
    <property type="entry name" value="UPF0053 PROTEIN YEGH"/>
    <property type="match status" value="1"/>
</dbReference>
<dbReference type="Pfam" id="PF00571">
    <property type="entry name" value="CBS"/>
    <property type="match status" value="2"/>
</dbReference>
<dbReference type="Pfam" id="PF03471">
    <property type="entry name" value="CorC_HlyC"/>
    <property type="match status" value="1"/>
</dbReference>
<dbReference type="Pfam" id="PF03741">
    <property type="entry name" value="TerC"/>
    <property type="match status" value="1"/>
</dbReference>
<dbReference type="SMART" id="SM00116">
    <property type="entry name" value="CBS"/>
    <property type="match status" value="2"/>
</dbReference>
<dbReference type="SMART" id="SM01091">
    <property type="entry name" value="CorC_HlyC"/>
    <property type="match status" value="1"/>
</dbReference>
<dbReference type="SUPFAM" id="SSF54631">
    <property type="entry name" value="CBS-domain pair"/>
    <property type="match status" value="1"/>
</dbReference>
<dbReference type="SUPFAM" id="SSF56176">
    <property type="entry name" value="FAD-binding/transporter-associated domain-like"/>
    <property type="match status" value="1"/>
</dbReference>
<dbReference type="PROSITE" id="PS51371">
    <property type="entry name" value="CBS"/>
    <property type="match status" value="2"/>
</dbReference>
<accession>P76389</accession>
<accession>P94756</accession>
<evidence type="ECO:0000255" key="1"/>
<evidence type="ECO:0000255" key="2">
    <source>
        <dbReference type="PROSITE-ProRule" id="PRU00703"/>
    </source>
</evidence>
<evidence type="ECO:0000305" key="3"/>
<proteinExistence type="inferred from homology"/>